<accession>A6UZJ8</accession>
<name>RL14_PSEP7</name>
<dbReference type="EMBL" id="CP000744">
    <property type="protein sequence ID" value="ABR82253.1"/>
    <property type="molecule type" value="Genomic_DNA"/>
</dbReference>
<dbReference type="RefSeq" id="WP_012074228.1">
    <property type="nucleotide sequence ID" value="NC_009656.1"/>
</dbReference>
<dbReference type="SMR" id="A6UZJ8"/>
<dbReference type="KEGG" id="pap:PSPA7_0847"/>
<dbReference type="HOGENOM" id="CLU_095071_2_1_6"/>
<dbReference type="Proteomes" id="UP000001582">
    <property type="component" value="Chromosome"/>
</dbReference>
<dbReference type="GO" id="GO:0022625">
    <property type="term" value="C:cytosolic large ribosomal subunit"/>
    <property type="evidence" value="ECO:0007669"/>
    <property type="project" value="TreeGrafter"/>
</dbReference>
<dbReference type="GO" id="GO:0070180">
    <property type="term" value="F:large ribosomal subunit rRNA binding"/>
    <property type="evidence" value="ECO:0007669"/>
    <property type="project" value="TreeGrafter"/>
</dbReference>
<dbReference type="GO" id="GO:0003735">
    <property type="term" value="F:structural constituent of ribosome"/>
    <property type="evidence" value="ECO:0007669"/>
    <property type="project" value="InterPro"/>
</dbReference>
<dbReference type="GO" id="GO:0006412">
    <property type="term" value="P:translation"/>
    <property type="evidence" value="ECO:0007669"/>
    <property type="project" value="UniProtKB-UniRule"/>
</dbReference>
<dbReference type="CDD" id="cd00337">
    <property type="entry name" value="Ribosomal_uL14"/>
    <property type="match status" value="1"/>
</dbReference>
<dbReference type="FunFam" id="2.40.150.20:FF:000001">
    <property type="entry name" value="50S ribosomal protein L14"/>
    <property type="match status" value="1"/>
</dbReference>
<dbReference type="Gene3D" id="2.40.150.20">
    <property type="entry name" value="Ribosomal protein L14"/>
    <property type="match status" value="1"/>
</dbReference>
<dbReference type="HAMAP" id="MF_01367">
    <property type="entry name" value="Ribosomal_uL14"/>
    <property type="match status" value="1"/>
</dbReference>
<dbReference type="InterPro" id="IPR000218">
    <property type="entry name" value="Ribosomal_uL14"/>
</dbReference>
<dbReference type="InterPro" id="IPR005745">
    <property type="entry name" value="Ribosomal_uL14_bac-type"/>
</dbReference>
<dbReference type="InterPro" id="IPR019972">
    <property type="entry name" value="Ribosomal_uL14_CS"/>
</dbReference>
<dbReference type="InterPro" id="IPR036853">
    <property type="entry name" value="Ribosomal_uL14_sf"/>
</dbReference>
<dbReference type="NCBIfam" id="TIGR01067">
    <property type="entry name" value="rplN_bact"/>
    <property type="match status" value="1"/>
</dbReference>
<dbReference type="PANTHER" id="PTHR11761">
    <property type="entry name" value="50S/60S RIBOSOMAL PROTEIN L14/L23"/>
    <property type="match status" value="1"/>
</dbReference>
<dbReference type="PANTHER" id="PTHR11761:SF3">
    <property type="entry name" value="LARGE RIBOSOMAL SUBUNIT PROTEIN UL14M"/>
    <property type="match status" value="1"/>
</dbReference>
<dbReference type="Pfam" id="PF00238">
    <property type="entry name" value="Ribosomal_L14"/>
    <property type="match status" value="1"/>
</dbReference>
<dbReference type="SMART" id="SM01374">
    <property type="entry name" value="Ribosomal_L14"/>
    <property type="match status" value="1"/>
</dbReference>
<dbReference type="SUPFAM" id="SSF50193">
    <property type="entry name" value="Ribosomal protein L14"/>
    <property type="match status" value="1"/>
</dbReference>
<dbReference type="PROSITE" id="PS00049">
    <property type="entry name" value="RIBOSOMAL_L14"/>
    <property type="match status" value="1"/>
</dbReference>
<sequence>MIQTQSMLDVADNSGARRVMCIKVLGGSHRRYAGIGDIIKVTVKEAIPRGKVKKGQVMTAVVVRTKHGVRRTDGSIIRFDGNAAVLLNSKQEPIGTRIFGPVTRELRTEKFMKIVSLAPEVL</sequence>
<feature type="chain" id="PRO_1000055675" description="Large ribosomal subunit protein uL14">
    <location>
        <begin position="1"/>
        <end position="122"/>
    </location>
</feature>
<comment type="function">
    <text evidence="1">Binds to 23S rRNA. Forms part of two intersubunit bridges in the 70S ribosome.</text>
</comment>
<comment type="subunit">
    <text evidence="1">Part of the 50S ribosomal subunit. Forms a cluster with proteins L3 and L19. In the 70S ribosome, L14 and L19 interact and together make contacts with the 16S rRNA in bridges B5 and B8.</text>
</comment>
<comment type="similarity">
    <text evidence="1">Belongs to the universal ribosomal protein uL14 family.</text>
</comment>
<keyword id="KW-0687">Ribonucleoprotein</keyword>
<keyword id="KW-0689">Ribosomal protein</keyword>
<keyword id="KW-0694">RNA-binding</keyword>
<keyword id="KW-0699">rRNA-binding</keyword>
<evidence type="ECO:0000255" key="1">
    <source>
        <dbReference type="HAMAP-Rule" id="MF_01367"/>
    </source>
</evidence>
<evidence type="ECO:0000305" key="2"/>
<proteinExistence type="inferred from homology"/>
<protein>
    <recommendedName>
        <fullName evidence="1">Large ribosomal subunit protein uL14</fullName>
    </recommendedName>
    <alternativeName>
        <fullName evidence="2">50S ribosomal protein L14</fullName>
    </alternativeName>
</protein>
<gene>
    <name evidence="1" type="primary">rplN</name>
    <name type="ordered locus">PSPA7_0847</name>
</gene>
<reference key="1">
    <citation type="submission" date="2007-06" db="EMBL/GenBank/DDBJ databases">
        <authorList>
            <person name="Dodson R.J."/>
            <person name="Harkins D."/>
            <person name="Paulsen I.T."/>
        </authorList>
    </citation>
    <scope>NUCLEOTIDE SEQUENCE [LARGE SCALE GENOMIC DNA]</scope>
    <source>
        <strain>DSM 24068 / PA7</strain>
    </source>
</reference>
<organism>
    <name type="scientific">Pseudomonas paraeruginosa (strain DSM 24068 / PA7)</name>
    <name type="common">Pseudomonas aeruginosa (strain PA7)</name>
    <dbReference type="NCBI Taxonomy" id="381754"/>
    <lineage>
        <taxon>Bacteria</taxon>
        <taxon>Pseudomonadati</taxon>
        <taxon>Pseudomonadota</taxon>
        <taxon>Gammaproteobacteria</taxon>
        <taxon>Pseudomonadales</taxon>
        <taxon>Pseudomonadaceae</taxon>
        <taxon>Pseudomonas</taxon>
        <taxon>Pseudomonas paraeruginosa</taxon>
    </lineage>
</organism>